<comment type="catalytic activity">
    <reaction evidence="1">
        <text>tRNA(Lys) + L-lysine + ATP = L-lysyl-tRNA(Lys) + AMP + diphosphate</text>
        <dbReference type="Rhea" id="RHEA:20792"/>
        <dbReference type="Rhea" id="RHEA-COMP:9696"/>
        <dbReference type="Rhea" id="RHEA-COMP:9697"/>
        <dbReference type="ChEBI" id="CHEBI:30616"/>
        <dbReference type="ChEBI" id="CHEBI:32551"/>
        <dbReference type="ChEBI" id="CHEBI:33019"/>
        <dbReference type="ChEBI" id="CHEBI:78442"/>
        <dbReference type="ChEBI" id="CHEBI:78529"/>
        <dbReference type="ChEBI" id="CHEBI:456215"/>
        <dbReference type="EC" id="6.1.1.6"/>
    </reaction>
</comment>
<comment type="cofactor">
    <cofactor evidence="1">
        <name>Mg(2+)</name>
        <dbReference type="ChEBI" id="CHEBI:18420"/>
    </cofactor>
    <text evidence="1">Binds 3 Mg(2+) ions per subunit.</text>
</comment>
<comment type="subunit">
    <text evidence="1">Homodimer.</text>
</comment>
<comment type="subcellular location">
    <subcellularLocation>
        <location evidence="1">Cytoplasm</location>
    </subcellularLocation>
</comment>
<comment type="similarity">
    <text evidence="1">Belongs to the class-II aminoacyl-tRNA synthetase family.</text>
</comment>
<gene>
    <name evidence="1" type="primary">lysS</name>
    <name type="ordered locus">SeSA_A3208</name>
</gene>
<name>SYK_SALSV</name>
<sequence length="505" mass="57575">MSEQNAQGADEVVDLNNEMKARREKLAALREQGIPFPNDFRRDRTSDQLHAEFDAKEAEELEALNIEVSVAGRMMTRRIMGKASFVTLQDVGGRIQLYVARDDLPEGVYNEQFKKWDLGDILGAKGKLFKTKTGELSIHCTELRLLTKALRPLPDKFHGLQDQEARYRQRYLDLISNDESRNTFKTRSKILAGIRQFMVARGFMEVETPMMQVIPGGASARPFITHHNALDLDMYLRIAPELYLKRLVVGGFERVFEINRNFRNEGISVRHNPEFTMMELYMAYADYKDLIELTESLFRTLAQDVLGTTQVPYGDEVFDFGKPFEKLTMREAIKKYRPETDMADLDNFDSAKAIAESIGIHVEKSWGLGRIVTEIFDEVAEAHLIQPTFITEYPAEVSPLARRNDVNPEITDRFEFFIGGREIGNGFSELNDAEDQAQRFLDQVNAKAAGDDEAMFYDEDYVTALEHGLPPTAGLGIGIDRMVMLFTNSHTIRDVILFPAMRPVK</sequence>
<reference key="1">
    <citation type="journal article" date="2011" name="J. Bacteriol.">
        <title>Comparative genomics of 28 Salmonella enterica isolates: evidence for CRISPR-mediated adaptive sublineage evolution.</title>
        <authorList>
            <person name="Fricke W.F."/>
            <person name="Mammel M.K."/>
            <person name="McDermott P.F."/>
            <person name="Tartera C."/>
            <person name="White D.G."/>
            <person name="Leclerc J.E."/>
            <person name="Ravel J."/>
            <person name="Cebula T.A."/>
        </authorList>
    </citation>
    <scope>NUCLEOTIDE SEQUENCE [LARGE SCALE GENOMIC DNA]</scope>
    <source>
        <strain>CVM19633</strain>
    </source>
</reference>
<protein>
    <recommendedName>
        <fullName evidence="1">Lysine--tRNA ligase</fullName>
        <ecNumber evidence="1">6.1.1.6</ecNumber>
    </recommendedName>
    <alternativeName>
        <fullName evidence="1">Lysyl-tRNA synthetase</fullName>
        <shortName evidence="1">LysRS</shortName>
    </alternativeName>
</protein>
<keyword id="KW-0030">Aminoacyl-tRNA synthetase</keyword>
<keyword id="KW-0067">ATP-binding</keyword>
<keyword id="KW-0963">Cytoplasm</keyword>
<keyword id="KW-0436">Ligase</keyword>
<keyword id="KW-0460">Magnesium</keyword>
<keyword id="KW-0479">Metal-binding</keyword>
<keyword id="KW-0547">Nucleotide-binding</keyword>
<keyword id="KW-0648">Protein biosynthesis</keyword>
<organism>
    <name type="scientific">Salmonella schwarzengrund (strain CVM19633)</name>
    <dbReference type="NCBI Taxonomy" id="439843"/>
    <lineage>
        <taxon>Bacteria</taxon>
        <taxon>Pseudomonadati</taxon>
        <taxon>Pseudomonadota</taxon>
        <taxon>Gammaproteobacteria</taxon>
        <taxon>Enterobacterales</taxon>
        <taxon>Enterobacteriaceae</taxon>
        <taxon>Salmonella</taxon>
    </lineage>
</organism>
<proteinExistence type="inferred from homology"/>
<accession>B4TUQ8</accession>
<dbReference type="EC" id="6.1.1.6" evidence="1"/>
<dbReference type="EMBL" id="CP001127">
    <property type="protein sequence ID" value="ACF91410.1"/>
    <property type="molecule type" value="Genomic_DNA"/>
</dbReference>
<dbReference type="RefSeq" id="WP_000003339.1">
    <property type="nucleotide sequence ID" value="NC_011094.1"/>
</dbReference>
<dbReference type="SMR" id="B4TUQ8"/>
<dbReference type="KEGG" id="sew:SeSA_A3208"/>
<dbReference type="HOGENOM" id="CLU_008255_6_0_6"/>
<dbReference type="Proteomes" id="UP000001865">
    <property type="component" value="Chromosome"/>
</dbReference>
<dbReference type="GO" id="GO:0005829">
    <property type="term" value="C:cytosol"/>
    <property type="evidence" value="ECO:0007669"/>
    <property type="project" value="TreeGrafter"/>
</dbReference>
<dbReference type="GO" id="GO:0005524">
    <property type="term" value="F:ATP binding"/>
    <property type="evidence" value="ECO:0007669"/>
    <property type="project" value="UniProtKB-UniRule"/>
</dbReference>
<dbReference type="GO" id="GO:0004824">
    <property type="term" value="F:lysine-tRNA ligase activity"/>
    <property type="evidence" value="ECO:0007669"/>
    <property type="project" value="UniProtKB-UniRule"/>
</dbReference>
<dbReference type="GO" id="GO:0000287">
    <property type="term" value="F:magnesium ion binding"/>
    <property type="evidence" value="ECO:0007669"/>
    <property type="project" value="UniProtKB-UniRule"/>
</dbReference>
<dbReference type="GO" id="GO:0000049">
    <property type="term" value="F:tRNA binding"/>
    <property type="evidence" value="ECO:0007669"/>
    <property type="project" value="TreeGrafter"/>
</dbReference>
<dbReference type="GO" id="GO:0006430">
    <property type="term" value="P:lysyl-tRNA aminoacylation"/>
    <property type="evidence" value="ECO:0007669"/>
    <property type="project" value="UniProtKB-UniRule"/>
</dbReference>
<dbReference type="CDD" id="cd00775">
    <property type="entry name" value="LysRS_core"/>
    <property type="match status" value="1"/>
</dbReference>
<dbReference type="CDD" id="cd04322">
    <property type="entry name" value="LysRS_N"/>
    <property type="match status" value="1"/>
</dbReference>
<dbReference type="FunFam" id="2.40.50.140:FF:000024">
    <property type="entry name" value="Lysine--tRNA ligase"/>
    <property type="match status" value="1"/>
</dbReference>
<dbReference type="FunFam" id="3.30.930.10:FF:000001">
    <property type="entry name" value="Lysine--tRNA ligase"/>
    <property type="match status" value="1"/>
</dbReference>
<dbReference type="Gene3D" id="3.30.930.10">
    <property type="entry name" value="Bira Bifunctional Protein, Domain 2"/>
    <property type="match status" value="1"/>
</dbReference>
<dbReference type="Gene3D" id="2.40.50.140">
    <property type="entry name" value="Nucleic acid-binding proteins"/>
    <property type="match status" value="1"/>
</dbReference>
<dbReference type="HAMAP" id="MF_00252">
    <property type="entry name" value="Lys_tRNA_synth_class2"/>
    <property type="match status" value="1"/>
</dbReference>
<dbReference type="InterPro" id="IPR004364">
    <property type="entry name" value="Aa-tRNA-synt_II"/>
</dbReference>
<dbReference type="InterPro" id="IPR006195">
    <property type="entry name" value="aa-tRNA-synth_II"/>
</dbReference>
<dbReference type="InterPro" id="IPR045864">
    <property type="entry name" value="aa-tRNA-synth_II/BPL/LPL"/>
</dbReference>
<dbReference type="InterPro" id="IPR002313">
    <property type="entry name" value="Lys-tRNA-ligase_II"/>
</dbReference>
<dbReference type="InterPro" id="IPR034762">
    <property type="entry name" value="Lys-tRNA-ligase_II_bac/euk"/>
</dbReference>
<dbReference type="InterPro" id="IPR044136">
    <property type="entry name" value="Lys-tRNA-ligase_II_N"/>
</dbReference>
<dbReference type="InterPro" id="IPR018149">
    <property type="entry name" value="Lys-tRNA-synth_II_C"/>
</dbReference>
<dbReference type="InterPro" id="IPR012340">
    <property type="entry name" value="NA-bd_OB-fold"/>
</dbReference>
<dbReference type="InterPro" id="IPR004365">
    <property type="entry name" value="NA-bd_OB_tRNA"/>
</dbReference>
<dbReference type="NCBIfam" id="TIGR00499">
    <property type="entry name" value="lysS_bact"/>
    <property type="match status" value="1"/>
</dbReference>
<dbReference type="NCBIfam" id="NF001756">
    <property type="entry name" value="PRK00484.1"/>
    <property type="match status" value="1"/>
</dbReference>
<dbReference type="NCBIfam" id="NF009101">
    <property type="entry name" value="PRK12445.1"/>
    <property type="match status" value="1"/>
</dbReference>
<dbReference type="PANTHER" id="PTHR42918:SF15">
    <property type="entry name" value="LYSINE--TRNA LIGASE, CHLOROPLASTIC_MITOCHONDRIAL"/>
    <property type="match status" value="1"/>
</dbReference>
<dbReference type="PANTHER" id="PTHR42918">
    <property type="entry name" value="LYSYL-TRNA SYNTHETASE"/>
    <property type="match status" value="1"/>
</dbReference>
<dbReference type="Pfam" id="PF00152">
    <property type="entry name" value="tRNA-synt_2"/>
    <property type="match status" value="1"/>
</dbReference>
<dbReference type="Pfam" id="PF01336">
    <property type="entry name" value="tRNA_anti-codon"/>
    <property type="match status" value="1"/>
</dbReference>
<dbReference type="PIRSF" id="PIRSF039101">
    <property type="entry name" value="LysRS2"/>
    <property type="match status" value="1"/>
</dbReference>
<dbReference type="PRINTS" id="PR00982">
    <property type="entry name" value="TRNASYNTHLYS"/>
</dbReference>
<dbReference type="SUPFAM" id="SSF55681">
    <property type="entry name" value="Class II aaRS and biotin synthetases"/>
    <property type="match status" value="1"/>
</dbReference>
<dbReference type="SUPFAM" id="SSF50249">
    <property type="entry name" value="Nucleic acid-binding proteins"/>
    <property type="match status" value="1"/>
</dbReference>
<dbReference type="PROSITE" id="PS50862">
    <property type="entry name" value="AA_TRNA_LIGASE_II"/>
    <property type="match status" value="1"/>
</dbReference>
<evidence type="ECO:0000255" key="1">
    <source>
        <dbReference type="HAMAP-Rule" id="MF_00252"/>
    </source>
</evidence>
<feature type="chain" id="PRO_1000101147" description="Lysine--tRNA ligase">
    <location>
        <begin position="1"/>
        <end position="505"/>
    </location>
</feature>
<feature type="binding site" evidence="1">
    <location>
        <position position="415"/>
    </location>
    <ligand>
        <name>Mg(2+)</name>
        <dbReference type="ChEBI" id="CHEBI:18420"/>
        <label>1</label>
    </ligand>
</feature>
<feature type="binding site" evidence="1">
    <location>
        <position position="422"/>
    </location>
    <ligand>
        <name>Mg(2+)</name>
        <dbReference type="ChEBI" id="CHEBI:18420"/>
        <label>1</label>
    </ligand>
</feature>
<feature type="binding site" evidence="1">
    <location>
        <position position="422"/>
    </location>
    <ligand>
        <name>Mg(2+)</name>
        <dbReference type="ChEBI" id="CHEBI:18420"/>
        <label>2</label>
    </ligand>
</feature>